<sequence>MSLFGSSPPNDGSAALNPAKTANSSRSTLFDNEAPTTRSGSALFADDDHDSPWDMPTPRKQRSRADLIRNLLPSGDVPESYIETFDAVVRTENRSTNGRITAGGVARTLAAAKLGADDQARIMGIIAPASASATGAGGGGDGAHGGEANSSAAAAAAAVGLGDLGRNEFNVLLALIGLVQEGEVASLDGVDERRRNLPQPKLQGLVNENVQPMLPNLSELGAKPPQRPVTPPKAPTPSPPKQQQQQQHQPPTLRKVSMEYPEDPWNAPDLHKGHNHGPLEHSTGHNGAADVPRSVANDLNGNDAVSYSTSPEVTTTSSALPGRTTSTFTTSQPPSGPSSIHNVAESIQESNGAWNYFPGSSSGGGFGEPADNAITGPFGDSGGPGQSVSGSVGGSNPNRSIGHVRSGSNVEENILVTLMPEKEGVFMFQHHNYEVSSIRRGSKVVRRYSDFVWLLDCLHKRYPFRVLPLLPPKRVAFNGNHLSNDGAFIEKRRRGLARFLNALVRHPVLGQEQLVIMFLTVPTELSVWRKQATISVQDEFTGRTLPPGLEDSLPPTLEELFARTRVGVRRSAELYISTCTIMDRLIKRSEGVAADHARMAVSLISLTETSADTYATDHNDVPLLNDGLQAMGRHLRTAQTLMEDEAKAWEEGVLEDLKRQRDALVSLRDMFDRRDRLDKDNIPFLQRRIETNEAKLQALNAKPEGMVKPGEKERVVEAIIKDKESIVTQHNRSVFVKECIRDELRFFQNTQYNVSRLTQDWAQERVKYSEMLADNWRRLLDDLEGMPLGD</sequence>
<name>MVP1_NEUCR</name>
<keyword id="KW-0963">Cytoplasm</keyword>
<keyword id="KW-0472">Membrane</keyword>
<keyword id="KW-0653">Protein transport</keyword>
<keyword id="KW-1185">Reference proteome</keyword>
<keyword id="KW-0813">Transport</keyword>
<reference key="1">
    <citation type="journal article" date="2003" name="Nature">
        <title>The genome sequence of the filamentous fungus Neurospora crassa.</title>
        <authorList>
            <person name="Galagan J.E."/>
            <person name="Calvo S.E."/>
            <person name="Borkovich K.A."/>
            <person name="Selker E.U."/>
            <person name="Read N.D."/>
            <person name="Jaffe D.B."/>
            <person name="FitzHugh W."/>
            <person name="Ma L.-J."/>
            <person name="Smirnov S."/>
            <person name="Purcell S."/>
            <person name="Rehman B."/>
            <person name="Elkins T."/>
            <person name="Engels R."/>
            <person name="Wang S."/>
            <person name="Nielsen C.B."/>
            <person name="Butler J."/>
            <person name="Endrizzi M."/>
            <person name="Qui D."/>
            <person name="Ianakiev P."/>
            <person name="Bell-Pedersen D."/>
            <person name="Nelson M.A."/>
            <person name="Werner-Washburne M."/>
            <person name="Selitrennikoff C.P."/>
            <person name="Kinsey J.A."/>
            <person name="Braun E.L."/>
            <person name="Zelter A."/>
            <person name="Schulte U."/>
            <person name="Kothe G.O."/>
            <person name="Jedd G."/>
            <person name="Mewes H.-W."/>
            <person name="Staben C."/>
            <person name="Marcotte E."/>
            <person name="Greenberg D."/>
            <person name="Roy A."/>
            <person name="Foley K."/>
            <person name="Naylor J."/>
            <person name="Stange-Thomann N."/>
            <person name="Barrett R."/>
            <person name="Gnerre S."/>
            <person name="Kamal M."/>
            <person name="Kamvysselis M."/>
            <person name="Mauceli E.W."/>
            <person name="Bielke C."/>
            <person name="Rudd S."/>
            <person name="Frishman D."/>
            <person name="Krystofova S."/>
            <person name="Rasmussen C."/>
            <person name="Metzenberg R.L."/>
            <person name="Perkins D.D."/>
            <person name="Kroken S."/>
            <person name="Cogoni C."/>
            <person name="Macino G."/>
            <person name="Catcheside D.E.A."/>
            <person name="Li W."/>
            <person name="Pratt R.J."/>
            <person name="Osmani S.A."/>
            <person name="DeSouza C.P.C."/>
            <person name="Glass N.L."/>
            <person name="Orbach M.J."/>
            <person name="Berglund J.A."/>
            <person name="Voelker R."/>
            <person name="Yarden O."/>
            <person name="Plamann M."/>
            <person name="Seiler S."/>
            <person name="Dunlap J.C."/>
            <person name="Radford A."/>
            <person name="Aramayo R."/>
            <person name="Natvig D.O."/>
            <person name="Alex L.A."/>
            <person name="Mannhaupt G."/>
            <person name="Ebbole D.J."/>
            <person name="Freitag M."/>
            <person name="Paulsen I."/>
            <person name="Sachs M.S."/>
            <person name="Lander E.S."/>
            <person name="Nusbaum C."/>
            <person name="Birren B.W."/>
        </authorList>
    </citation>
    <scope>NUCLEOTIDE SEQUENCE [LARGE SCALE GENOMIC DNA]</scope>
    <source>
        <strain>ATCC 24698 / 74-OR23-1A / CBS 708.71 / DSM 1257 / FGSC 987</strain>
    </source>
</reference>
<gene>
    <name type="primary">vsp-1</name>
    <name type="synonym">mvp1</name>
    <name type="ORF">NCU05715</name>
</gene>
<feature type="chain" id="PRO_0000238600" description="Sorting nexin mvp1">
    <location>
        <begin position="1"/>
        <end position="790"/>
    </location>
</feature>
<feature type="domain" description="PX" evidence="2">
    <location>
        <begin position="411"/>
        <end position="525"/>
    </location>
</feature>
<feature type="region of interest" description="Disordered" evidence="3">
    <location>
        <begin position="1"/>
        <end position="62"/>
    </location>
</feature>
<feature type="region of interest" description="Disordered" evidence="3">
    <location>
        <begin position="215"/>
        <end position="342"/>
    </location>
</feature>
<feature type="region of interest" description="Disordered" evidence="3">
    <location>
        <begin position="373"/>
        <end position="406"/>
    </location>
</feature>
<feature type="compositionally biased region" description="Polar residues" evidence="3">
    <location>
        <begin position="1"/>
        <end position="10"/>
    </location>
</feature>
<feature type="compositionally biased region" description="Polar residues" evidence="3">
    <location>
        <begin position="20"/>
        <end position="40"/>
    </location>
</feature>
<feature type="compositionally biased region" description="Pro residues" evidence="3">
    <location>
        <begin position="225"/>
        <end position="240"/>
    </location>
</feature>
<feature type="compositionally biased region" description="Low complexity" evidence="3">
    <location>
        <begin position="241"/>
        <end position="252"/>
    </location>
</feature>
<feature type="compositionally biased region" description="Basic and acidic residues" evidence="3">
    <location>
        <begin position="269"/>
        <end position="283"/>
    </location>
</feature>
<feature type="compositionally biased region" description="Polar residues" evidence="3">
    <location>
        <begin position="297"/>
        <end position="319"/>
    </location>
</feature>
<feature type="compositionally biased region" description="Low complexity" evidence="3">
    <location>
        <begin position="324"/>
        <end position="339"/>
    </location>
</feature>
<feature type="compositionally biased region" description="Low complexity" evidence="3">
    <location>
        <begin position="386"/>
        <end position="400"/>
    </location>
</feature>
<feature type="binding site" evidence="1">
    <location>
        <position position="447"/>
    </location>
    <ligand>
        <name>a 1,2-diacyl-sn-glycero-3-phospho-(1D-myo-inositol-3-phosphate)</name>
        <dbReference type="ChEBI" id="CHEBI:58088"/>
    </ligand>
</feature>
<feature type="binding site" evidence="1">
    <location>
        <position position="449"/>
    </location>
    <ligand>
        <name>a 1,2-diacyl-sn-glycero-3-phospho-(1D-myo-inositol-3-phosphate)</name>
        <dbReference type="ChEBI" id="CHEBI:58088"/>
    </ligand>
</feature>
<feature type="binding site" evidence="1">
    <location>
        <position position="473"/>
    </location>
    <ligand>
        <name>a 1,2-diacyl-sn-glycero-3-phospho-(1D-myo-inositol-3-phosphate)</name>
        <dbReference type="ChEBI" id="CHEBI:58088"/>
    </ligand>
</feature>
<feature type="binding site" evidence="1">
    <location>
        <position position="492"/>
    </location>
    <ligand>
        <name>a 1,2-diacyl-sn-glycero-3-phospho-(1D-myo-inositol-3-phosphate)</name>
        <dbReference type="ChEBI" id="CHEBI:58088"/>
    </ligand>
</feature>
<proteinExistence type="inferred from homology"/>
<accession>Q7SB97</accession>
<accession>U9WGC1</accession>
<organism>
    <name type="scientific">Neurospora crassa (strain ATCC 24698 / 74-OR23-1A / CBS 708.71 / DSM 1257 / FGSC 987)</name>
    <dbReference type="NCBI Taxonomy" id="367110"/>
    <lineage>
        <taxon>Eukaryota</taxon>
        <taxon>Fungi</taxon>
        <taxon>Dikarya</taxon>
        <taxon>Ascomycota</taxon>
        <taxon>Pezizomycotina</taxon>
        <taxon>Sordariomycetes</taxon>
        <taxon>Sordariomycetidae</taxon>
        <taxon>Sordariales</taxon>
        <taxon>Sordariaceae</taxon>
        <taxon>Neurospora</taxon>
    </lineage>
</organism>
<comment type="function">
    <text evidence="1">Required for vacuolar protein sorting.</text>
</comment>
<comment type="subcellular location">
    <subcellularLocation>
        <location evidence="1">Cytoplasm</location>
    </subcellularLocation>
    <subcellularLocation>
        <location evidence="1">Membrane</location>
        <topology evidence="1">Peripheral membrane protein</topology>
        <orientation evidence="1">Cytoplasmic side</orientation>
    </subcellularLocation>
</comment>
<comment type="domain">
    <text evidence="1">The PX domain binds phosphatidylinositol 3-phosphate which is necessary for peripheral membrane localization.</text>
</comment>
<comment type="similarity">
    <text evidence="4">Belongs to the sorting nexin family.</text>
</comment>
<evidence type="ECO:0000250" key="1"/>
<evidence type="ECO:0000255" key="2">
    <source>
        <dbReference type="PROSITE-ProRule" id="PRU00147"/>
    </source>
</evidence>
<evidence type="ECO:0000256" key="3">
    <source>
        <dbReference type="SAM" id="MobiDB-lite"/>
    </source>
</evidence>
<evidence type="ECO:0000305" key="4"/>
<dbReference type="EMBL" id="CM002238">
    <property type="protein sequence ID" value="ESA43133.1"/>
    <property type="molecule type" value="Genomic_DNA"/>
</dbReference>
<dbReference type="RefSeq" id="XP_011393870.1">
    <property type="nucleotide sequence ID" value="XM_011395568.1"/>
</dbReference>
<dbReference type="SMR" id="Q7SB97"/>
<dbReference type="STRING" id="367110.Q7SB97"/>
<dbReference type="PaxDb" id="5141-EFNCRP00000007649"/>
<dbReference type="EnsemblFungi" id="ESA43133">
    <property type="protein sequence ID" value="ESA43133"/>
    <property type="gene ID" value="NCU05715"/>
</dbReference>
<dbReference type="GeneID" id="3879059"/>
<dbReference type="KEGG" id="ncr:NCU05715"/>
<dbReference type="VEuPathDB" id="FungiDB:NCU05715"/>
<dbReference type="HOGENOM" id="CLU_009058_1_0_1"/>
<dbReference type="InParanoid" id="Q7SB97"/>
<dbReference type="OrthoDB" id="10064318at2759"/>
<dbReference type="Proteomes" id="UP000001805">
    <property type="component" value="Chromosome 3, Linkage Group III"/>
</dbReference>
<dbReference type="GO" id="GO:0005829">
    <property type="term" value="C:cytosol"/>
    <property type="evidence" value="ECO:0007669"/>
    <property type="project" value="GOC"/>
</dbReference>
<dbReference type="GO" id="GO:0005768">
    <property type="term" value="C:endosome"/>
    <property type="evidence" value="ECO:0000318"/>
    <property type="project" value="GO_Central"/>
</dbReference>
<dbReference type="GO" id="GO:0016020">
    <property type="term" value="C:membrane"/>
    <property type="evidence" value="ECO:0007669"/>
    <property type="project" value="UniProtKB-SubCell"/>
</dbReference>
<dbReference type="GO" id="GO:0032266">
    <property type="term" value="F:phosphatidylinositol-3-phosphate binding"/>
    <property type="evidence" value="ECO:0000318"/>
    <property type="project" value="GO_Central"/>
</dbReference>
<dbReference type="GO" id="GO:0006623">
    <property type="term" value="P:protein targeting to vacuole"/>
    <property type="evidence" value="ECO:0000318"/>
    <property type="project" value="GO_Central"/>
</dbReference>
<dbReference type="GO" id="GO:0042147">
    <property type="term" value="P:retrograde transport, endosome to Golgi"/>
    <property type="evidence" value="ECO:0000318"/>
    <property type="project" value="GO_Central"/>
</dbReference>
<dbReference type="CDD" id="cd07597">
    <property type="entry name" value="BAR_SNX8"/>
    <property type="match status" value="1"/>
</dbReference>
<dbReference type="CDD" id="cd06866">
    <property type="entry name" value="PX_SNX8_Mvp1p_like"/>
    <property type="match status" value="1"/>
</dbReference>
<dbReference type="FunFam" id="3.30.1520.10:FF:000037">
    <property type="entry name" value="Sorting nexin mvp-1"/>
    <property type="match status" value="1"/>
</dbReference>
<dbReference type="FunFam" id="1.20.1270.60:FF:000072">
    <property type="entry name" value="Sorting nexin MVP1"/>
    <property type="match status" value="1"/>
</dbReference>
<dbReference type="Gene3D" id="1.20.1270.60">
    <property type="entry name" value="Arfaptin homology (AH) domain/BAR domain"/>
    <property type="match status" value="1"/>
</dbReference>
<dbReference type="Gene3D" id="3.30.1520.10">
    <property type="entry name" value="Phox-like domain"/>
    <property type="match status" value="1"/>
</dbReference>
<dbReference type="InterPro" id="IPR027267">
    <property type="entry name" value="AH/BAR_dom_sf"/>
</dbReference>
<dbReference type="InterPro" id="IPR001683">
    <property type="entry name" value="PX_dom"/>
</dbReference>
<dbReference type="InterPro" id="IPR036871">
    <property type="entry name" value="PX_dom_sf"/>
</dbReference>
<dbReference type="InterPro" id="IPR028662">
    <property type="entry name" value="SNX8/Mvp1"/>
</dbReference>
<dbReference type="InterPro" id="IPR035704">
    <property type="entry name" value="SNX8/Mvp1_PX"/>
</dbReference>
<dbReference type="InterPro" id="IPR045734">
    <property type="entry name" value="Snx8_BAR_dom"/>
</dbReference>
<dbReference type="PANTHER" id="PTHR47554">
    <property type="entry name" value="SORTING NEXIN MVP1"/>
    <property type="match status" value="1"/>
</dbReference>
<dbReference type="PANTHER" id="PTHR47554:SF1">
    <property type="entry name" value="SORTING NEXIN MVP1"/>
    <property type="match status" value="1"/>
</dbReference>
<dbReference type="Pfam" id="PF00787">
    <property type="entry name" value="PX"/>
    <property type="match status" value="1"/>
</dbReference>
<dbReference type="Pfam" id="PF19566">
    <property type="entry name" value="Snx8_BAR_dom"/>
    <property type="match status" value="1"/>
</dbReference>
<dbReference type="SMART" id="SM00312">
    <property type="entry name" value="PX"/>
    <property type="match status" value="1"/>
</dbReference>
<dbReference type="SUPFAM" id="SSF64268">
    <property type="entry name" value="PX domain"/>
    <property type="match status" value="1"/>
</dbReference>
<dbReference type="PROSITE" id="PS50195">
    <property type="entry name" value="PX"/>
    <property type="match status" value="1"/>
</dbReference>
<protein>
    <recommendedName>
        <fullName>Sorting nexin mvp1</fullName>
    </recommendedName>
    <alternativeName>
        <fullName>Vacuolar sorting protein 1</fullName>
    </alternativeName>
</protein>